<accession>P24853</accession>
<accession>Q9XSC7</accession>
<evidence type="ECO:0000250" key="1"/>
<evidence type="ECO:0000250" key="2">
    <source>
        <dbReference type="UniProtKB" id="P18065"/>
    </source>
</evidence>
<evidence type="ECO:0000255" key="3"/>
<evidence type="ECO:0000255" key="4">
    <source>
        <dbReference type="PROSITE-ProRule" id="PRU00500"/>
    </source>
</evidence>
<evidence type="ECO:0000255" key="5">
    <source>
        <dbReference type="PROSITE-ProRule" id="PRU00653"/>
    </source>
</evidence>
<evidence type="ECO:0000256" key="6">
    <source>
        <dbReference type="SAM" id="MobiDB-lite"/>
    </source>
</evidence>
<evidence type="ECO:0000269" key="7">
    <source>
    </source>
</evidence>
<proteinExistence type="evidence at protein level"/>
<feature type="signal peptide" evidence="3">
    <location>
        <begin position="1"/>
        <end position="29"/>
    </location>
</feature>
<feature type="chain" id="PRO_0000014372" description="Insulin-like growth factor-binding protein 2">
    <location>
        <begin position="30"/>
        <end position="316"/>
    </location>
</feature>
<feature type="domain" description="IGFBP N-terminal" evidence="5">
    <location>
        <begin position="31"/>
        <end position="126"/>
    </location>
</feature>
<feature type="domain" description="Thyroglobulin type-1" evidence="4">
    <location>
        <begin position="215"/>
        <end position="297"/>
    </location>
</feature>
<feature type="region of interest" description="Disordered" evidence="6">
    <location>
        <begin position="189"/>
        <end position="217"/>
    </location>
</feature>
<feature type="short sequence motif" description="Cell attachment site" evidence="3">
    <location>
        <begin position="292"/>
        <end position="294"/>
    </location>
</feature>
<feature type="disulfide bond" evidence="5">
    <location>
        <begin position="35"/>
        <end position="76"/>
    </location>
</feature>
<feature type="disulfide bond" evidence="5">
    <location>
        <begin position="38"/>
        <end position="78"/>
    </location>
</feature>
<feature type="disulfide bond" evidence="5">
    <location>
        <begin position="46"/>
        <end position="79"/>
    </location>
</feature>
<feature type="disulfide bond" evidence="5">
    <location>
        <begin position="68"/>
        <end position="82"/>
    </location>
</feature>
<feature type="disulfide bond" evidence="5">
    <location>
        <begin position="90"/>
        <end position="103"/>
    </location>
</feature>
<feature type="disulfide bond" evidence="5">
    <location>
        <begin position="97"/>
        <end position="123"/>
    </location>
</feature>
<feature type="disulfide bond" evidence="4">
    <location>
        <begin position="218"/>
        <end position="252"/>
    </location>
</feature>
<feature type="disulfide bond" evidence="4">
    <location>
        <begin position="263"/>
        <end position="274"/>
    </location>
</feature>
<feature type="disulfide bond" evidence="4">
    <location>
        <begin position="276"/>
        <end position="297"/>
    </location>
</feature>
<keyword id="KW-0903">Direct protein sequencing</keyword>
<keyword id="KW-1015">Disulfide bond</keyword>
<keyword id="KW-0325">Glycoprotein</keyword>
<keyword id="KW-0340">Growth factor binding</keyword>
<keyword id="KW-0341">Growth regulation</keyword>
<keyword id="KW-1185">Reference proteome</keyword>
<keyword id="KW-0964">Secreted</keyword>
<keyword id="KW-0732">Signal</keyword>
<reference key="1">
    <citation type="journal article" date="1999" name="J. Mol. Endocrinol.">
        <title>Complex mediation of uterine endometrial epithelial cell growth by insulin-like growth factor-II (IGF-II) and IGF-binding protein-2.</title>
        <authorList>
            <person name="Badinga L."/>
            <person name="Song S."/>
            <person name="Simmen R.C.M."/>
            <person name="Clarke J.B."/>
            <person name="Clemmons D.R."/>
            <person name="Simmen F.A."/>
        </authorList>
    </citation>
    <scope>NUCLEOTIDE SEQUENCE [MRNA]</scope>
    <scope>FUNCTION</scope>
</reference>
<reference key="2">
    <citation type="journal article" date="1991" name="Biochem. Biophys. Res. Commun.">
        <title>Identification and NH2-terminal amino acid sequence of three insulin-like growth factor-binding proteins in porcine serum.</title>
        <authorList>
            <person name="Coleman M.E."/>
            <person name="Pan Y.-C.E."/>
            <person name="Etherton T.D."/>
        </authorList>
    </citation>
    <scope>PROTEIN SEQUENCE OF 33-55</scope>
</reference>
<gene>
    <name type="primary">IGFBP2</name>
</gene>
<comment type="function">
    <text evidence="7">May have both growth-inhibiting and growth-promoting effects, depending on tissue type; increases IGF-induced DNA synthesis in the uterine epithelium. IGF-binding proteins prolong the half-life of the IGFs and have been shown to either inhibit or stimulate the growth promoting effects of the IGFs on cell culture. They alter the interaction of IGFs with their cell surface receptors.</text>
</comment>
<comment type="function">
    <text evidence="2">Multifunctional protein that plays a critical role in regulating the availability of IGFs such as IGF1 and IGF2 to their receptors and thereby regulates IGF-mediated cellular processes including proliferation, differentiation, and apoptosis in a cell-type specific manner. Functions coordinately with receptor protein tyrosine phosphatase beta/PTPRB and the IGF1 receptor to regulate IGF1-mediated signaling by stimulating the phosphorylation of PTEN leading to its inactivation and AKT1 activation. Plays a positive role in cell migration via interaction with integrin alpha5/ITGA5 through an RGD motif. Additionally, interaction with ITGA5/ITGB1 enhances the adhesion of endothelial progenitor cells to endothelial cells. Upon mitochondrial damage, facilitates apoptosis with ITGA5 of podocytes, and then activates the phosphorylation of focal adhesion kinase (FAK)-mediated mitochondrial injury.</text>
</comment>
<comment type="subunit">
    <text evidence="2">Interacts with IGF1. Interacts with IGF2. Interacts (via RGD motif) with integrin alpha5/ITGA5; this interaction induces cell migration, adhesion or apoptosis according to the context. Interacts with PTPRB; this interaction leads to PTPRB dimerization and inactivation.</text>
</comment>
<comment type="subcellular location">
    <subcellularLocation>
        <location evidence="2">Secreted</location>
    </subcellularLocation>
</comment>
<comment type="domain">
    <text evidence="1">The C-terminus is required for IGF-binding and growth inhibition.</text>
</comment>
<comment type="PTM">
    <text evidence="2">Cleaved by MMP9 leading to release of free IGF2 from IGFBP2-IGF2 complex, which contributes to enhance the motility and the growth of astrocytes.</text>
</comment>
<comment type="PTM">
    <text evidence="2">O-glycosylated.</text>
</comment>
<protein>
    <recommendedName>
        <fullName>Insulin-like growth factor-binding protein 2</fullName>
        <shortName>IBP-2</shortName>
        <shortName>IGF-binding protein 2</shortName>
        <shortName>IGFBP-2</shortName>
        <shortName>pIGFBP-2</shortName>
    </recommendedName>
</protein>
<organism>
    <name type="scientific">Sus scrofa</name>
    <name type="common">Pig</name>
    <dbReference type="NCBI Taxonomy" id="9823"/>
    <lineage>
        <taxon>Eukaryota</taxon>
        <taxon>Metazoa</taxon>
        <taxon>Chordata</taxon>
        <taxon>Craniata</taxon>
        <taxon>Vertebrata</taxon>
        <taxon>Euteleostomi</taxon>
        <taxon>Mammalia</taxon>
        <taxon>Eutheria</taxon>
        <taxon>Laurasiatheria</taxon>
        <taxon>Artiodactyla</taxon>
        <taxon>Suina</taxon>
        <taxon>Suidae</taxon>
        <taxon>Sus</taxon>
    </lineage>
</organism>
<dbReference type="EMBL" id="AF120326">
    <property type="protein sequence ID" value="AAD33246.1"/>
    <property type="molecule type" value="mRNA"/>
</dbReference>
<dbReference type="PIR" id="JH0515">
    <property type="entry name" value="JH0515"/>
</dbReference>
<dbReference type="RefSeq" id="NP_999168.1">
    <property type="nucleotide sequence ID" value="NM_214003.1"/>
</dbReference>
<dbReference type="BMRB" id="P24853"/>
<dbReference type="SMR" id="P24853"/>
<dbReference type="FunCoup" id="P24853">
    <property type="interactions" value="401"/>
</dbReference>
<dbReference type="STRING" id="9823.ENSSSCP00000058079"/>
<dbReference type="PaxDb" id="9823-ENSSSCP00000026205"/>
<dbReference type="PeptideAtlas" id="P24853"/>
<dbReference type="Ensembl" id="ENSSSCT00000046489.2">
    <property type="protein sequence ID" value="ENSSSCP00000058079.1"/>
    <property type="gene ID" value="ENSSSCG00000035392.2"/>
</dbReference>
<dbReference type="Ensembl" id="ENSSSCT00025066360.1">
    <property type="protein sequence ID" value="ENSSSCP00025028359.1"/>
    <property type="gene ID" value="ENSSSCG00025048742.1"/>
</dbReference>
<dbReference type="Ensembl" id="ENSSSCT00030032504.1">
    <property type="protein sequence ID" value="ENSSSCP00030014613.1"/>
    <property type="gene ID" value="ENSSSCG00030023423.1"/>
</dbReference>
<dbReference type="Ensembl" id="ENSSSCT00035033861.1">
    <property type="protein sequence ID" value="ENSSSCP00035013370.1"/>
    <property type="gene ID" value="ENSSSCG00035025709.1"/>
</dbReference>
<dbReference type="Ensembl" id="ENSSSCT00040063583.1">
    <property type="protein sequence ID" value="ENSSSCP00040026850.1"/>
    <property type="gene ID" value="ENSSSCG00040047179.1"/>
</dbReference>
<dbReference type="Ensembl" id="ENSSSCT00045012214.1">
    <property type="protein sequence ID" value="ENSSSCP00045008336.1"/>
    <property type="gene ID" value="ENSSSCG00045007360.1"/>
</dbReference>
<dbReference type="Ensembl" id="ENSSSCT00050099451.1">
    <property type="protein sequence ID" value="ENSSSCP00050043019.1"/>
    <property type="gene ID" value="ENSSSCG00050072827.1"/>
</dbReference>
<dbReference type="Ensembl" id="ENSSSCT00055035208.1">
    <property type="protein sequence ID" value="ENSSSCP00055027961.1"/>
    <property type="gene ID" value="ENSSSCG00055017972.1"/>
</dbReference>
<dbReference type="Ensembl" id="ENSSSCT00060102645.1">
    <property type="protein sequence ID" value="ENSSSCP00060044757.1"/>
    <property type="gene ID" value="ENSSSCG00060074969.1"/>
</dbReference>
<dbReference type="Ensembl" id="ENSSSCT00065084063.1">
    <property type="protein sequence ID" value="ENSSSCP00065036647.1"/>
    <property type="gene ID" value="ENSSSCG00065061351.1"/>
</dbReference>
<dbReference type="Ensembl" id="ENSSSCT00070035784.1">
    <property type="protein sequence ID" value="ENSSSCP00070029905.1"/>
    <property type="gene ID" value="ENSSSCG00070018133.1"/>
</dbReference>
<dbReference type="Ensembl" id="ENSSSCT00085024565">
    <property type="protein sequence ID" value="ENSSSCP00085016959"/>
    <property type="gene ID" value="ENSSSCG00085013028"/>
</dbReference>
<dbReference type="Ensembl" id="ENSSSCT00090050100">
    <property type="protein sequence ID" value="ENSSSCP00090031166"/>
    <property type="gene ID" value="ENSSSCG00090028303"/>
</dbReference>
<dbReference type="Ensembl" id="ENSSSCT00105071682">
    <property type="protein sequence ID" value="ENSSSCP00105050707"/>
    <property type="gene ID" value="ENSSSCG00105037598"/>
</dbReference>
<dbReference type="Ensembl" id="ENSSSCT00110007526">
    <property type="protein sequence ID" value="ENSSSCP00110005389"/>
    <property type="gene ID" value="ENSSSCG00110003859"/>
</dbReference>
<dbReference type="Ensembl" id="ENSSSCT00115001064">
    <property type="protein sequence ID" value="ENSSSCP00115000994"/>
    <property type="gene ID" value="ENSSSCG00115000657"/>
</dbReference>
<dbReference type="Ensembl" id="ENSSSCT00130059649">
    <property type="protein sequence ID" value="ENSSSCP00130042760"/>
    <property type="gene ID" value="ENSSSCG00130030547"/>
</dbReference>
<dbReference type="GeneID" id="397064"/>
<dbReference type="KEGG" id="ssc:397064"/>
<dbReference type="CTD" id="3485"/>
<dbReference type="VGNC" id="VGNC:109491">
    <property type="gene designation" value="IGFBP2"/>
</dbReference>
<dbReference type="eggNOG" id="ENOG502QRWQ">
    <property type="taxonomic scope" value="Eukaryota"/>
</dbReference>
<dbReference type="GeneTree" id="ENSGT00940000158542"/>
<dbReference type="InParanoid" id="P24853"/>
<dbReference type="OMA" id="NLMPITM"/>
<dbReference type="OrthoDB" id="9984807at2759"/>
<dbReference type="Reactome" id="R-SSC-381426">
    <property type="pathway name" value="Regulation of Insulin-like Growth Factor (IGF) transport and uptake by Insulin-like Growth Factor Binding Proteins (IGFBPs)"/>
</dbReference>
<dbReference type="ChiTaRS" id="IGFBP2">
    <property type="organism name" value="pig"/>
</dbReference>
<dbReference type="Proteomes" id="UP000008227">
    <property type="component" value="Chromosome 15"/>
</dbReference>
<dbReference type="Proteomes" id="UP000314985">
    <property type="component" value="Chromosome 15"/>
</dbReference>
<dbReference type="Proteomes" id="UP000694570">
    <property type="component" value="Unplaced"/>
</dbReference>
<dbReference type="Proteomes" id="UP000694571">
    <property type="component" value="Unplaced"/>
</dbReference>
<dbReference type="Proteomes" id="UP000694720">
    <property type="component" value="Unplaced"/>
</dbReference>
<dbReference type="Proteomes" id="UP000694722">
    <property type="component" value="Unplaced"/>
</dbReference>
<dbReference type="Proteomes" id="UP000694723">
    <property type="component" value="Unplaced"/>
</dbReference>
<dbReference type="Proteomes" id="UP000694724">
    <property type="component" value="Unplaced"/>
</dbReference>
<dbReference type="Proteomes" id="UP000694725">
    <property type="component" value="Unplaced"/>
</dbReference>
<dbReference type="Proteomes" id="UP000694726">
    <property type="component" value="Unplaced"/>
</dbReference>
<dbReference type="Proteomes" id="UP000694727">
    <property type="component" value="Unplaced"/>
</dbReference>
<dbReference type="Proteomes" id="UP000694728">
    <property type="component" value="Unplaced"/>
</dbReference>
<dbReference type="Bgee" id="ENSSSCG00000035392">
    <property type="expression patterns" value="Expressed in forelimb bud and 44 other cell types or tissues"/>
</dbReference>
<dbReference type="ExpressionAtlas" id="P24853">
    <property type="expression patterns" value="baseline and differential"/>
</dbReference>
<dbReference type="GO" id="GO:0005576">
    <property type="term" value="C:extracellular region"/>
    <property type="evidence" value="ECO:0000250"/>
    <property type="project" value="UniProtKB"/>
</dbReference>
<dbReference type="GO" id="GO:0005615">
    <property type="term" value="C:extracellular space"/>
    <property type="evidence" value="ECO:0000250"/>
    <property type="project" value="UniProtKB"/>
</dbReference>
<dbReference type="GO" id="GO:0031994">
    <property type="term" value="F:insulin-like growth factor I binding"/>
    <property type="evidence" value="ECO:0000250"/>
    <property type="project" value="UniProtKB"/>
</dbReference>
<dbReference type="GO" id="GO:0031995">
    <property type="term" value="F:insulin-like growth factor II binding"/>
    <property type="evidence" value="ECO:0000250"/>
    <property type="project" value="UniProtKB"/>
</dbReference>
<dbReference type="GO" id="GO:0004864">
    <property type="term" value="F:protein phosphatase inhibitor activity"/>
    <property type="evidence" value="ECO:0007669"/>
    <property type="project" value="Ensembl"/>
</dbReference>
<dbReference type="GO" id="GO:0141069">
    <property type="term" value="F:receptor ligand inhibitor activity"/>
    <property type="evidence" value="ECO:0007669"/>
    <property type="project" value="Ensembl"/>
</dbReference>
<dbReference type="GO" id="GO:0030547">
    <property type="term" value="F:signaling receptor inhibitor activity"/>
    <property type="evidence" value="ECO:0007669"/>
    <property type="project" value="Ensembl"/>
</dbReference>
<dbReference type="GO" id="GO:0001649">
    <property type="term" value="P:osteoblast differentiation"/>
    <property type="evidence" value="ECO:0007669"/>
    <property type="project" value="Ensembl"/>
</dbReference>
<dbReference type="GO" id="GO:0042104">
    <property type="term" value="P:positive regulation of activated T cell proliferation"/>
    <property type="evidence" value="ECO:0000250"/>
    <property type="project" value="UniProtKB"/>
</dbReference>
<dbReference type="GO" id="GO:0045927">
    <property type="term" value="P:positive regulation of growth"/>
    <property type="evidence" value="ECO:0000315"/>
    <property type="project" value="UniProtKB"/>
</dbReference>
<dbReference type="GO" id="GO:0043567">
    <property type="term" value="P:regulation of insulin-like growth factor receptor signaling pathway"/>
    <property type="evidence" value="ECO:0000250"/>
    <property type="project" value="UniProtKB"/>
</dbReference>
<dbReference type="GO" id="GO:0032868">
    <property type="term" value="P:response to insulin"/>
    <property type="evidence" value="ECO:0000250"/>
    <property type="project" value="AgBase"/>
</dbReference>
<dbReference type="CDD" id="cd00191">
    <property type="entry name" value="TY"/>
    <property type="match status" value="1"/>
</dbReference>
<dbReference type="FunFam" id="4.10.40.20:FF:000007">
    <property type="entry name" value="Insulin-like growth factor-binding protein 2"/>
    <property type="match status" value="1"/>
</dbReference>
<dbReference type="FunFam" id="4.10.800.10:FF:000002">
    <property type="entry name" value="Insulin-like growth factor-binding protein 2"/>
    <property type="match status" value="1"/>
</dbReference>
<dbReference type="Gene3D" id="4.10.40.20">
    <property type="match status" value="1"/>
</dbReference>
<dbReference type="Gene3D" id="4.10.800.10">
    <property type="entry name" value="Thyroglobulin type-1"/>
    <property type="match status" value="1"/>
</dbReference>
<dbReference type="InterPro" id="IPR009030">
    <property type="entry name" value="Growth_fac_rcpt_cys_sf"/>
</dbReference>
<dbReference type="InterPro" id="IPR012210">
    <property type="entry name" value="IGFBP-2"/>
</dbReference>
<dbReference type="InterPro" id="IPR000867">
    <property type="entry name" value="IGFBP-like"/>
</dbReference>
<dbReference type="InterPro" id="IPR022321">
    <property type="entry name" value="IGFBP_1-6_chordata"/>
</dbReference>
<dbReference type="InterPro" id="IPR017891">
    <property type="entry name" value="Insulin_GF-bd_Cys-rich_CS"/>
</dbReference>
<dbReference type="InterPro" id="IPR000716">
    <property type="entry name" value="Thyroglobulin_1"/>
</dbReference>
<dbReference type="InterPro" id="IPR036857">
    <property type="entry name" value="Thyroglobulin_1_sf"/>
</dbReference>
<dbReference type="PANTHER" id="PTHR11551">
    <property type="entry name" value="INSULIN-LIKE GROWTH FACTOR BINDING PROTEIN"/>
    <property type="match status" value="1"/>
</dbReference>
<dbReference type="PANTHER" id="PTHR11551:SF5">
    <property type="entry name" value="INSULIN-LIKE GROWTH FACTOR-BINDING PROTEIN 2"/>
    <property type="match status" value="1"/>
</dbReference>
<dbReference type="Pfam" id="PF00219">
    <property type="entry name" value="IGFBP"/>
    <property type="match status" value="1"/>
</dbReference>
<dbReference type="Pfam" id="PF00086">
    <property type="entry name" value="Thyroglobulin_1"/>
    <property type="match status" value="1"/>
</dbReference>
<dbReference type="PRINTS" id="PR01976">
    <property type="entry name" value="IGFBPFAMILY"/>
</dbReference>
<dbReference type="PRINTS" id="PR01978">
    <property type="entry name" value="IGFBPFAMILY2"/>
</dbReference>
<dbReference type="SMART" id="SM00121">
    <property type="entry name" value="IB"/>
    <property type="match status" value="1"/>
</dbReference>
<dbReference type="SMART" id="SM00211">
    <property type="entry name" value="TY"/>
    <property type="match status" value="1"/>
</dbReference>
<dbReference type="SUPFAM" id="SSF57184">
    <property type="entry name" value="Growth factor receptor domain"/>
    <property type="match status" value="1"/>
</dbReference>
<dbReference type="SUPFAM" id="SSF57610">
    <property type="entry name" value="Thyroglobulin type-1 domain"/>
    <property type="match status" value="1"/>
</dbReference>
<dbReference type="PROSITE" id="PS00222">
    <property type="entry name" value="IGFBP_N_1"/>
    <property type="match status" value="1"/>
</dbReference>
<dbReference type="PROSITE" id="PS51323">
    <property type="entry name" value="IGFBP_N_2"/>
    <property type="match status" value="1"/>
</dbReference>
<dbReference type="PROSITE" id="PS00484">
    <property type="entry name" value="THYROGLOBULIN_1_1"/>
    <property type="match status" value="1"/>
</dbReference>
<dbReference type="PROSITE" id="PS51162">
    <property type="entry name" value="THYROGLOBULIN_1_2"/>
    <property type="match status" value="1"/>
</dbReference>
<name>IBP2_PIG</name>
<sequence length="316" mass="33937">MLPRLGGTALSLLPLLLLLLGTGGRGARAEVLFRCPPCTPESLAACRPPPAAPPSAGAGPAGDSRAPCELVREPGCGCCSVCARLEGERCGVYTPRCAQGLRCYPHPGSELPLQALVLGEGTCEKRRDAEYGASPEQVADNGDDAEGGLVENHVDGNVNLLGGTGGAGRKPLKSGMKELAVFREKVTEQHRQMGKGGKHHLGLEEPKKLRPPPARTPCQQELDQVLERISTMRLPDERGPLEHLYSLHIPNCDKHGLYNLKQCKMSLNGQRGECWCVNPNTGKLIQGAPTIRGDPECHLFYNEQQGARGAHTQRMQ</sequence>